<proteinExistence type="inferred from homology"/>
<keyword id="KW-0378">Hydrolase</keyword>
<evidence type="ECO:0000255" key="1">
    <source>
        <dbReference type="HAMAP-Rule" id="MF_00298"/>
    </source>
</evidence>
<comment type="function">
    <text evidence="1">Accelerates the degradation of transcripts by removing pyrophosphate from the 5'-end of triphosphorylated RNA, leading to a more labile monophosphorylated state that can stimulate subsequent ribonuclease cleavage.</text>
</comment>
<comment type="cofactor">
    <cofactor evidence="1">
        <name>a divalent metal cation</name>
        <dbReference type="ChEBI" id="CHEBI:60240"/>
    </cofactor>
</comment>
<comment type="similarity">
    <text evidence="1">Belongs to the Nudix hydrolase family. RppH subfamily.</text>
</comment>
<protein>
    <recommendedName>
        <fullName evidence="1">RNA pyrophosphohydrolase</fullName>
        <ecNumber evidence="1">3.6.1.-</ecNumber>
    </recommendedName>
    <alternativeName>
        <fullName evidence="1">(Di)nucleoside polyphosphate hydrolase</fullName>
    </alternativeName>
</protein>
<feature type="chain" id="PRO_0000231936" description="RNA pyrophosphohydrolase">
    <location>
        <begin position="1"/>
        <end position="176"/>
    </location>
</feature>
<feature type="domain" description="Nudix hydrolase" evidence="1">
    <location>
        <begin position="6"/>
        <end position="149"/>
    </location>
</feature>
<feature type="short sequence motif" description="Nudix box">
    <location>
        <begin position="38"/>
        <end position="59"/>
    </location>
</feature>
<dbReference type="EC" id="3.6.1.-" evidence="1"/>
<dbReference type="EMBL" id="CP000036">
    <property type="protein sequence ID" value="ABB67251.1"/>
    <property type="molecule type" value="Genomic_DNA"/>
</dbReference>
<dbReference type="RefSeq" id="WP_000564483.1">
    <property type="nucleotide sequence ID" value="NC_007613.1"/>
</dbReference>
<dbReference type="SMR" id="Q31XF7"/>
<dbReference type="KEGG" id="sbo:SBO_2722"/>
<dbReference type="HOGENOM" id="CLU_087195_3_2_6"/>
<dbReference type="Proteomes" id="UP000007067">
    <property type="component" value="Chromosome"/>
</dbReference>
<dbReference type="GO" id="GO:0005737">
    <property type="term" value="C:cytoplasm"/>
    <property type="evidence" value="ECO:0007669"/>
    <property type="project" value="TreeGrafter"/>
</dbReference>
<dbReference type="GO" id="GO:0034353">
    <property type="term" value="F:mRNA 5'-diphosphatase activity"/>
    <property type="evidence" value="ECO:0007669"/>
    <property type="project" value="TreeGrafter"/>
</dbReference>
<dbReference type="GO" id="GO:0006402">
    <property type="term" value="P:mRNA catabolic process"/>
    <property type="evidence" value="ECO:0007669"/>
    <property type="project" value="TreeGrafter"/>
</dbReference>
<dbReference type="CDD" id="cd03671">
    <property type="entry name" value="NUDIX_Ap4A_hydrolase_plant_like"/>
    <property type="match status" value="1"/>
</dbReference>
<dbReference type="FunFam" id="3.90.79.10:FF:000001">
    <property type="entry name" value="RNA pyrophosphohydrolase"/>
    <property type="match status" value="1"/>
</dbReference>
<dbReference type="Gene3D" id="3.90.79.10">
    <property type="entry name" value="Nucleoside Triphosphate Pyrophosphohydrolase"/>
    <property type="match status" value="1"/>
</dbReference>
<dbReference type="HAMAP" id="MF_00298">
    <property type="entry name" value="Nudix_RppH"/>
    <property type="match status" value="1"/>
</dbReference>
<dbReference type="InterPro" id="IPR020476">
    <property type="entry name" value="Nudix_hydrolase"/>
</dbReference>
<dbReference type="InterPro" id="IPR015797">
    <property type="entry name" value="NUDIX_hydrolase-like_dom_sf"/>
</dbReference>
<dbReference type="InterPro" id="IPR020084">
    <property type="entry name" value="NUDIX_hydrolase_CS"/>
</dbReference>
<dbReference type="InterPro" id="IPR000086">
    <property type="entry name" value="NUDIX_hydrolase_dom"/>
</dbReference>
<dbReference type="InterPro" id="IPR022927">
    <property type="entry name" value="RppH"/>
</dbReference>
<dbReference type="NCBIfam" id="NF001934">
    <property type="entry name" value="PRK00714.1-1"/>
    <property type="match status" value="1"/>
</dbReference>
<dbReference type="NCBIfam" id="NF001937">
    <property type="entry name" value="PRK00714.1-4"/>
    <property type="match status" value="1"/>
</dbReference>
<dbReference type="NCBIfam" id="NF001938">
    <property type="entry name" value="PRK00714.1-5"/>
    <property type="match status" value="1"/>
</dbReference>
<dbReference type="PANTHER" id="PTHR23114">
    <property type="entry name" value="M7GPPPN-MRNA HYDROLASE"/>
    <property type="match status" value="1"/>
</dbReference>
<dbReference type="PANTHER" id="PTHR23114:SF17">
    <property type="entry name" value="M7GPPPN-MRNA HYDROLASE"/>
    <property type="match status" value="1"/>
</dbReference>
<dbReference type="Pfam" id="PF00293">
    <property type="entry name" value="NUDIX"/>
    <property type="match status" value="1"/>
</dbReference>
<dbReference type="PRINTS" id="PR00502">
    <property type="entry name" value="NUDIXFAMILY"/>
</dbReference>
<dbReference type="SUPFAM" id="SSF55811">
    <property type="entry name" value="Nudix"/>
    <property type="match status" value="1"/>
</dbReference>
<dbReference type="PROSITE" id="PS51462">
    <property type="entry name" value="NUDIX"/>
    <property type="match status" value="1"/>
</dbReference>
<dbReference type="PROSITE" id="PS00893">
    <property type="entry name" value="NUDIX_BOX"/>
    <property type="match status" value="1"/>
</dbReference>
<gene>
    <name evidence="1" type="primary">rppH</name>
    <name evidence="1" type="synonym">nudH</name>
    <name type="ordered locus">SBO_2722</name>
</gene>
<reference key="1">
    <citation type="journal article" date="2005" name="Nucleic Acids Res.">
        <title>Genome dynamics and diversity of Shigella species, the etiologic agents of bacillary dysentery.</title>
        <authorList>
            <person name="Yang F."/>
            <person name="Yang J."/>
            <person name="Zhang X."/>
            <person name="Chen L."/>
            <person name="Jiang Y."/>
            <person name="Yan Y."/>
            <person name="Tang X."/>
            <person name="Wang J."/>
            <person name="Xiong Z."/>
            <person name="Dong J."/>
            <person name="Xue Y."/>
            <person name="Zhu Y."/>
            <person name="Xu X."/>
            <person name="Sun L."/>
            <person name="Chen S."/>
            <person name="Nie H."/>
            <person name="Peng J."/>
            <person name="Xu J."/>
            <person name="Wang Y."/>
            <person name="Yuan Z."/>
            <person name="Wen Y."/>
            <person name="Yao Z."/>
            <person name="Shen Y."/>
            <person name="Qiang B."/>
            <person name="Hou Y."/>
            <person name="Yu J."/>
            <person name="Jin Q."/>
        </authorList>
    </citation>
    <scope>NUCLEOTIDE SEQUENCE [LARGE SCALE GENOMIC DNA]</scope>
    <source>
        <strain>Sb227</strain>
    </source>
</reference>
<sequence length="176" mass="20817">MIDDDGYRPNVGIVICNRQGQVMWARRFGQHSWQFPQGGINPGESAEQAMYRELFEEVGLSRKDVRILASTRNWLRYKLPKRLVRWDTKPVCIGQKQKWFLLQLVSGDAEIHMPTSSTPEFDGWRWVSYWYPVRQVVSFKRDVYRRVMKEFASVVMSLQENTPKPQNTSAYRRKRG</sequence>
<accession>Q31XF7</accession>
<organism>
    <name type="scientific">Shigella boydii serotype 4 (strain Sb227)</name>
    <dbReference type="NCBI Taxonomy" id="300268"/>
    <lineage>
        <taxon>Bacteria</taxon>
        <taxon>Pseudomonadati</taxon>
        <taxon>Pseudomonadota</taxon>
        <taxon>Gammaproteobacteria</taxon>
        <taxon>Enterobacterales</taxon>
        <taxon>Enterobacteriaceae</taxon>
        <taxon>Shigella</taxon>
    </lineage>
</organism>
<name>RPPH_SHIBS</name>